<gene>
    <name evidence="1" type="primary">matK</name>
</gene>
<organism>
    <name type="scientific">Magnolia figo</name>
    <name type="common">Banana shrub</name>
    <name type="synonym">Michelia figo</name>
    <dbReference type="NCBI Taxonomy" id="13612"/>
    <lineage>
        <taxon>Eukaryota</taxon>
        <taxon>Viridiplantae</taxon>
        <taxon>Streptophyta</taxon>
        <taxon>Embryophyta</taxon>
        <taxon>Tracheophyta</taxon>
        <taxon>Spermatophyta</taxon>
        <taxon>Magnoliopsida</taxon>
        <taxon>Magnoliidae</taxon>
        <taxon>Magnoliales</taxon>
        <taxon>Magnoliaceae</taxon>
        <taxon>Magnolia</taxon>
    </lineage>
</organism>
<dbReference type="EMBL" id="AF123467">
    <property type="protein sequence ID" value="AAF43245.1"/>
    <property type="molecule type" value="Genomic_DNA"/>
</dbReference>
<dbReference type="GO" id="GO:0009507">
    <property type="term" value="C:chloroplast"/>
    <property type="evidence" value="ECO:0007669"/>
    <property type="project" value="UniProtKB-SubCell"/>
</dbReference>
<dbReference type="GO" id="GO:0003723">
    <property type="term" value="F:RNA binding"/>
    <property type="evidence" value="ECO:0007669"/>
    <property type="project" value="UniProtKB-KW"/>
</dbReference>
<dbReference type="GO" id="GO:0006397">
    <property type="term" value="P:mRNA processing"/>
    <property type="evidence" value="ECO:0007669"/>
    <property type="project" value="UniProtKB-KW"/>
</dbReference>
<dbReference type="GO" id="GO:0008380">
    <property type="term" value="P:RNA splicing"/>
    <property type="evidence" value="ECO:0007669"/>
    <property type="project" value="UniProtKB-UniRule"/>
</dbReference>
<dbReference type="GO" id="GO:0008033">
    <property type="term" value="P:tRNA processing"/>
    <property type="evidence" value="ECO:0007669"/>
    <property type="project" value="UniProtKB-KW"/>
</dbReference>
<dbReference type="HAMAP" id="MF_01390">
    <property type="entry name" value="MatK"/>
    <property type="match status" value="1"/>
</dbReference>
<dbReference type="InterPro" id="IPR024937">
    <property type="entry name" value="Domain_X"/>
</dbReference>
<dbReference type="InterPro" id="IPR002866">
    <property type="entry name" value="Maturase_MatK"/>
</dbReference>
<dbReference type="InterPro" id="IPR024942">
    <property type="entry name" value="Maturase_MatK_N"/>
</dbReference>
<dbReference type="PANTHER" id="PTHR34811">
    <property type="entry name" value="MATURASE K"/>
    <property type="match status" value="1"/>
</dbReference>
<dbReference type="PANTHER" id="PTHR34811:SF1">
    <property type="entry name" value="MATURASE K"/>
    <property type="match status" value="1"/>
</dbReference>
<dbReference type="Pfam" id="PF01348">
    <property type="entry name" value="Intron_maturas2"/>
    <property type="match status" value="1"/>
</dbReference>
<dbReference type="Pfam" id="PF01824">
    <property type="entry name" value="MatK_N"/>
    <property type="match status" value="1"/>
</dbReference>
<feature type="chain" id="PRO_0000143522" description="Maturase K">
    <location>
        <begin position="1"/>
        <end position="507"/>
    </location>
</feature>
<name>MATK_MAGFI</name>
<sequence>MEELQGYLEIDRSRQQHFLYPLLFQEYIYALAHDHGLNGSIFYEPMENFGYDNKSSSLIVKRLITRMHQQNHVILSVNDSNESIFVGHNKNFYFQMVSEGFAVIMEIPFSLRLVSSLEEKEIAKSHNSRSIHSIFPFFEDKLSHLNHVSDILIPHPIHLEILVQTLHCWIQDAPSLHLLRFFLHEYRNSNSLITPKKSISLFSKENQRFFLLLYNSHVYECESVLVFLRKQSSHLRSTSSGTFLERTHFYGKIEHLVVVLRNDFQKTLWLFKDPFMHYVRYQGKSILASKGTHLLMKKWKSHLVHFWQCHFYLWSLPDRIHINQLYNHFLYFLGYLSSVRLNTSVVGIQMLENSFLIDTSINKFETLVPIIPLIGSVAKAKFCNVSGHPISKSVRADSSDSDIINRFGRIYRNLSHYHSGSSKKQTLYRIKYILRLSCARTLARKHKSTVRAFLKRLGSEFLEEFLTEEEQVLSLIFQRTSSPSYRSHRERIWYLDIIRINDLANHS</sequence>
<accession>Q9MVD8</accession>
<evidence type="ECO:0000255" key="1">
    <source>
        <dbReference type="HAMAP-Rule" id="MF_01390"/>
    </source>
</evidence>
<reference key="1">
    <citation type="journal article" date="2000" name="Theor. Appl. Genet.">
        <title>Phylogenetic relationships of the Magnoliaceae inferred from cpDNA matK sequences.</title>
        <authorList>
            <person name="Shi S."/>
            <person name="Jin H."/>
            <person name="Zhong Y."/>
            <person name="He X."/>
            <person name="Huang Y."/>
            <person name="Tan F."/>
            <person name="Boufford D.E."/>
        </authorList>
        <dbReference type="AGRICOLA" id="IND22081501"/>
    </citation>
    <scope>NUCLEOTIDE SEQUENCE [GENOMIC DNA]</scope>
</reference>
<protein>
    <recommendedName>
        <fullName evidence="1">Maturase K</fullName>
    </recommendedName>
    <alternativeName>
        <fullName evidence="1">Intron maturase</fullName>
    </alternativeName>
</protein>
<comment type="function">
    <text evidence="1">Usually encoded in the trnK tRNA gene intron. Probably assists in splicing its own and other chloroplast group II introns.</text>
</comment>
<comment type="subcellular location">
    <subcellularLocation>
        <location>Plastid</location>
        <location>Chloroplast</location>
    </subcellularLocation>
</comment>
<comment type="similarity">
    <text evidence="1">Belongs to the intron maturase 2 family. MatK subfamily.</text>
</comment>
<proteinExistence type="inferred from homology"/>
<keyword id="KW-0150">Chloroplast</keyword>
<keyword id="KW-0507">mRNA processing</keyword>
<keyword id="KW-0934">Plastid</keyword>
<keyword id="KW-0694">RNA-binding</keyword>
<keyword id="KW-0819">tRNA processing</keyword>
<geneLocation type="chloroplast"/>